<dbReference type="EC" id="3.4.21.92" evidence="1"/>
<dbReference type="EMBL" id="AE001363">
    <property type="protein sequence ID" value="AAD18660.1"/>
    <property type="molecule type" value="Genomic_DNA"/>
</dbReference>
<dbReference type="EMBL" id="AE002161">
    <property type="protein sequence ID" value="AAF38099.1"/>
    <property type="molecule type" value="Genomic_DNA"/>
</dbReference>
<dbReference type="EMBL" id="BA000008">
    <property type="protein sequence ID" value="BAA98726.1"/>
    <property type="molecule type" value="Genomic_DNA"/>
</dbReference>
<dbReference type="EMBL" id="AE009440">
    <property type="protein sequence ID" value="AAP98470.1"/>
    <property type="molecule type" value="Genomic_DNA"/>
</dbReference>
<dbReference type="PIR" id="D86555">
    <property type="entry name" value="D86555"/>
</dbReference>
<dbReference type="PIR" id="G72067">
    <property type="entry name" value="G72067"/>
</dbReference>
<dbReference type="RefSeq" id="NP_224716.1">
    <property type="nucleotide sequence ID" value="NC_000922.1"/>
</dbReference>
<dbReference type="RefSeq" id="WP_010883158.1">
    <property type="nucleotide sequence ID" value="NZ_LN847257.1"/>
</dbReference>
<dbReference type="SMR" id="Q9Z832"/>
<dbReference type="STRING" id="406984.CPK_ORF01034"/>
<dbReference type="MEROPS" id="S14.005"/>
<dbReference type="GeneID" id="45050562"/>
<dbReference type="KEGG" id="cpa:CP_0233"/>
<dbReference type="KEGG" id="cpj:clpP_1"/>
<dbReference type="KEGG" id="cpn:CPn_0520"/>
<dbReference type="KEGG" id="cpt:CpB0541"/>
<dbReference type="PATRIC" id="fig|115713.3.peg.579"/>
<dbReference type="eggNOG" id="COG0740">
    <property type="taxonomic scope" value="Bacteria"/>
</dbReference>
<dbReference type="HOGENOM" id="CLU_058707_4_0_0"/>
<dbReference type="OMA" id="ERKVFLW"/>
<dbReference type="OrthoDB" id="20499at2"/>
<dbReference type="Proteomes" id="UP000000583">
    <property type="component" value="Chromosome"/>
</dbReference>
<dbReference type="Proteomes" id="UP000000801">
    <property type="component" value="Chromosome"/>
</dbReference>
<dbReference type="GO" id="GO:0005737">
    <property type="term" value="C:cytoplasm"/>
    <property type="evidence" value="ECO:0007669"/>
    <property type="project" value="UniProtKB-SubCell"/>
</dbReference>
<dbReference type="GO" id="GO:0009368">
    <property type="term" value="C:endopeptidase Clp complex"/>
    <property type="evidence" value="ECO:0007669"/>
    <property type="project" value="TreeGrafter"/>
</dbReference>
<dbReference type="GO" id="GO:0004176">
    <property type="term" value="F:ATP-dependent peptidase activity"/>
    <property type="evidence" value="ECO:0007669"/>
    <property type="project" value="InterPro"/>
</dbReference>
<dbReference type="GO" id="GO:0051117">
    <property type="term" value="F:ATPase binding"/>
    <property type="evidence" value="ECO:0007669"/>
    <property type="project" value="TreeGrafter"/>
</dbReference>
<dbReference type="GO" id="GO:0004252">
    <property type="term" value="F:serine-type endopeptidase activity"/>
    <property type="evidence" value="ECO:0007669"/>
    <property type="project" value="UniProtKB-UniRule"/>
</dbReference>
<dbReference type="GO" id="GO:0006515">
    <property type="term" value="P:protein quality control for misfolded or incompletely synthesized proteins"/>
    <property type="evidence" value="ECO:0007669"/>
    <property type="project" value="TreeGrafter"/>
</dbReference>
<dbReference type="CDD" id="cd07017">
    <property type="entry name" value="S14_ClpP_2"/>
    <property type="match status" value="1"/>
</dbReference>
<dbReference type="FunFam" id="3.90.226.10:FF:000055">
    <property type="entry name" value="ATP-dependent Clp protease proteolytic subunit"/>
    <property type="match status" value="1"/>
</dbReference>
<dbReference type="Gene3D" id="3.90.226.10">
    <property type="entry name" value="2-enoyl-CoA Hydratase, Chain A, domain 1"/>
    <property type="match status" value="1"/>
</dbReference>
<dbReference type="HAMAP" id="MF_00444">
    <property type="entry name" value="ClpP"/>
    <property type="match status" value="1"/>
</dbReference>
<dbReference type="InterPro" id="IPR001907">
    <property type="entry name" value="ClpP"/>
</dbReference>
<dbReference type="InterPro" id="IPR029045">
    <property type="entry name" value="ClpP/crotonase-like_dom_sf"/>
</dbReference>
<dbReference type="InterPro" id="IPR023562">
    <property type="entry name" value="ClpP/TepA"/>
</dbReference>
<dbReference type="InterPro" id="IPR033135">
    <property type="entry name" value="ClpP_His_AS"/>
</dbReference>
<dbReference type="NCBIfam" id="NF009205">
    <property type="entry name" value="PRK12553.1"/>
    <property type="match status" value="1"/>
</dbReference>
<dbReference type="PANTHER" id="PTHR10381">
    <property type="entry name" value="ATP-DEPENDENT CLP PROTEASE PROTEOLYTIC SUBUNIT"/>
    <property type="match status" value="1"/>
</dbReference>
<dbReference type="PANTHER" id="PTHR10381:SF11">
    <property type="entry name" value="ATP-DEPENDENT CLP PROTEASE PROTEOLYTIC SUBUNIT, MITOCHONDRIAL"/>
    <property type="match status" value="1"/>
</dbReference>
<dbReference type="Pfam" id="PF00574">
    <property type="entry name" value="CLP_protease"/>
    <property type="match status" value="1"/>
</dbReference>
<dbReference type="PRINTS" id="PR00127">
    <property type="entry name" value="CLPPROTEASEP"/>
</dbReference>
<dbReference type="SUPFAM" id="SSF52096">
    <property type="entry name" value="ClpP/crotonase"/>
    <property type="match status" value="1"/>
</dbReference>
<dbReference type="PROSITE" id="PS00382">
    <property type="entry name" value="CLP_PROTEASE_HIS"/>
    <property type="match status" value="1"/>
</dbReference>
<evidence type="ECO:0000255" key="1">
    <source>
        <dbReference type="HAMAP-Rule" id="MF_00444"/>
    </source>
</evidence>
<organism>
    <name type="scientific">Chlamydia pneumoniae</name>
    <name type="common">Chlamydophila pneumoniae</name>
    <dbReference type="NCBI Taxonomy" id="83558"/>
    <lineage>
        <taxon>Bacteria</taxon>
        <taxon>Pseudomonadati</taxon>
        <taxon>Chlamydiota</taxon>
        <taxon>Chlamydiia</taxon>
        <taxon>Chlamydiales</taxon>
        <taxon>Chlamydiaceae</taxon>
        <taxon>Chlamydia/Chlamydophila group</taxon>
        <taxon>Chlamydia</taxon>
    </lineage>
</organism>
<sequence length="191" mass="21020">MADGEVHKLRDIIEKELLEARRVFFSEPVTEKSASDAIKKLWYLELKDPGKPIVFVINSPGGSVDAGFAVWDQIKMLTSPVTTVVTGLAASMGSVLSLCAAPGRRFATPHSRIMIHQPSIGGPITGQATDLDIHAREILKTKARIIDVYVEATNQPRDIIEKAIDRDMWMTANEAKDFGLLDGILFSFNDL</sequence>
<accession>Q9Z832</accession>
<accession>Q9JQ83</accession>
<feature type="chain" id="PRO_0000179532" description="ATP-dependent Clp protease proteolytic subunit 1">
    <location>
        <begin position="1"/>
        <end position="191"/>
    </location>
</feature>
<feature type="active site" description="Nucleophile" evidence="1">
    <location>
        <position position="91"/>
    </location>
</feature>
<feature type="active site" evidence="1">
    <location>
        <position position="116"/>
    </location>
</feature>
<protein>
    <recommendedName>
        <fullName evidence="1">ATP-dependent Clp protease proteolytic subunit 1</fullName>
        <ecNumber evidence="1">3.4.21.92</ecNumber>
    </recommendedName>
    <alternativeName>
        <fullName evidence="1">Endopeptidase Clp 1</fullName>
    </alternativeName>
</protein>
<comment type="function">
    <text evidence="1">Cleaves peptides in various proteins in a process that requires ATP hydrolysis. Has a chymotrypsin-like activity. Plays a major role in the degradation of misfolded proteins.</text>
</comment>
<comment type="catalytic activity">
    <reaction evidence="1">
        <text>Hydrolysis of proteins to small peptides in the presence of ATP and magnesium. alpha-casein is the usual test substrate. In the absence of ATP, only oligopeptides shorter than five residues are hydrolyzed (such as succinyl-Leu-Tyr-|-NHMec, and Leu-Tyr-Leu-|-Tyr-Trp, in which cleavage of the -Tyr-|-Leu- and -Tyr-|-Trp bonds also occurs).</text>
        <dbReference type="EC" id="3.4.21.92"/>
    </reaction>
</comment>
<comment type="subunit">
    <text evidence="1">Fourteen ClpP subunits assemble into 2 heptameric rings which stack back to back to give a disk-like structure with a central cavity, resembling the structure of eukaryotic proteasomes.</text>
</comment>
<comment type="subcellular location">
    <subcellularLocation>
        <location evidence="1">Cytoplasm</location>
    </subcellularLocation>
</comment>
<comment type="similarity">
    <text evidence="1">Belongs to the peptidase S14 family.</text>
</comment>
<name>CLPP1_CHLPN</name>
<proteinExistence type="inferred from homology"/>
<reference key="1">
    <citation type="journal article" date="1999" name="Nat. Genet.">
        <title>Comparative genomes of Chlamydia pneumoniae and C. trachomatis.</title>
        <authorList>
            <person name="Kalman S."/>
            <person name="Mitchell W.P."/>
            <person name="Marathe R."/>
            <person name="Lammel C.J."/>
            <person name="Fan J."/>
            <person name="Hyman R.W."/>
            <person name="Olinger L."/>
            <person name="Grimwood J."/>
            <person name="Davis R.W."/>
            <person name="Stephens R.S."/>
        </authorList>
    </citation>
    <scope>NUCLEOTIDE SEQUENCE [LARGE SCALE GENOMIC DNA]</scope>
    <source>
        <strain>CWL029</strain>
    </source>
</reference>
<reference key="2">
    <citation type="journal article" date="2000" name="Nucleic Acids Res.">
        <title>Genome sequences of Chlamydia trachomatis MoPn and Chlamydia pneumoniae AR39.</title>
        <authorList>
            <person name="Read T.D."/>
            <person name="Brunham R.C."/>
            <person name="Shen C."/>
            <person name="Gill S.R."/>
            <person name="Heidelberg J.F."/>
            <person name="White O."/>
            <person name="Hickey E.K."/>
            <person name="Peterson J.D."/>
            <person name="Utterback T.R."/>
            <person name="Berry K.J."/>
            <person name="Bass S."/>
            <person name="Linher K.D."/>
            <person name="Weidman J.F."/>
            <person name="Khouri H.M."/>
            <person name="Craven B."/>
            <person name="Bowman C."/>
            <person name="Dodson R.J."/>
            <person name="Gwinn M.L."/>
            <person name="Nelson W.C."/>
            <person name="DeBoy R.T."/>
            <person name="Kolonay J.F."/>
            <person name="McClarty G."/>
            <person name="Salzberg S.L."/>
            <person name="Eisen J.A."/>
            <person name="Fraser C.M."/>
        </authorList>
    </citation>
    <scope>NUCLEOTIDE SEQUENCE [LARGE SCALE GENOMIC DNA]</scope>
    <source>
        <strain>AR39</strain>
    </source>
</reference>
<reference key="3">
    <citation type="journal article" date="2000" name="Nucleic Acids Res.">
        <title>Comparison of whole genome sequences of Chlamydia pneumoniae J138 from Japan and CWL029 from USA.</title>
        <authorList>
            <person name="Shirai M."/>
            <person name="Hirakawa H."/>
            <person name="Kimoto M."/>
            <person name="Tabuchi M."/>
            <person name="Kishi F."/>
            <person name="Ouchi K."/>
            <person name="Shiba T."/>
            <person name="Ishii K."/>
            <person name="Hattori M."/>
            <person name="Kuhara S."/>
            <person name="Nakazawa T."/>
        </authorList>
    </citation>
    <scope>NUCLEOTIDE SEQUENCE [LARGE SCALE GENOMIC DNA]</scope>
    <source>
        <strain>J138</strain>
    </source>
</reference>
<reference key="4">
    <citation type="submission" date="2002-05" db="EMBL/GenBank/DDBJ databases">
        <title>The genome sequence of Chlamydia pneumoniae TW183 and comparison with other Chlamydia strains based on whole genome sequence analysis.</title>
        <authorList>
            <person name="Geng M.M."/>
            <person name="Schuhmacher A."/>
            <person name="Muehldorfer I."/>
            <person name="Bensch K.W."/>
            <person name="Schaefer K.P."/>
            <person name="Schneider S."/>
            <person name="Pohl T."/>
            <person name="Essig A."/>
            <person name="Marre R."/>
            <person name="Melchers K."/>
        </authorList>
    </citation>
    <scope>NUCLEOTIDE SEQUENCE [LARGE SCALE GENOMIC DNA]</scope>
    <source>
        <strain>TW-183</strain>
    </source>
</reference>
<keyword id="KW-0963">Cytoplasm</keyword>
<keyword id="KW-0378">Hydrolase</keyword>
<keyword id="KW-0645">Protease</keyword>
<keyword id="KW-0720">Serine protease</keyword>
<gene>
    <name evidence="1" type="primary">clpP1</name>
    <name type="synonym">clp</name>
    <name type="ordered locus">CPn_0520</name>
    <name type="ordered locus">CP_0233</name>
    <name type="ordered locus">CpB0541</name>
</gene>